<accession>B7KIQ6</accession>
<comment type="function">
    <text evidence="1">Catalyzes the specific phosphorylation of 1,6-anhydro-N-acetylmuramic acid (anhMurNAc) with the simultaneous cleavage of the 1,6-anhydro ring, generating MurNAc-6-P. Is required for the utilization of anhMurNAc either imported from the medium or derived from its own cell wall murein, and thus plays a role in cell wall recycling.</text>
</comment>
<comment type="catalytic activity">
    <reaction evidence="1">
        <text>1,6-anhydro-N-acetyl-beta-muramate + ATP + H2O = N-acetyl-D-muramate 6-phosphate + ADP + H(+)</text>
        <dbReference type="Rhea" id="RHEA:24952"/>
        <dbReference type="ChEBI" id="CHEBI:15377"/>
        <dbReference type="ChEBI" id="CHEBI:15378"/>
        <dbReference type="ChEBI" id="CHEBI:30616"/>
        <dbReference type="ChEBI" id="CHEBI:58690"/>
        <dbReference type="ChEBI" id="CHEBI:58722"/>
        <dbReference type="ChEBI" id="CHEBI:456216"/>
        <dbReference type="EC" id="2.7.1.170"/>
    </reaction>
</comment>
<comment type="pathway">
    <text evidence="1">Amino-sugar metabolism; 1,6-anhydro-N-acetylmuramate degradation.</text>
</comment>
<comment type="pathway">
    <text evidence="1">Cell wall biogenesis; peptidoglycan recycling.</text>
</comment>
<comment type="similarity">
    <text evidence="1">Belongs to the anhydro-N-acetylmuramic acid kinase family.</text>
</comment>
<feature type="chain" id="PRO_1000214164" description="Anhydro-N-acetylmuramic acid kinase">
    <location>
        <begin position="1"/>
        <end position="391"/>
    </location>
</feature>
<feature type="binding site" evidence="1">
    <location>
        <begin position="9"/>
        <end position="16"/>
    </location>
    <ligand>
        <name>ATP</name>
        <dbReference type="ChEBI" id="CHEBI:30616"/>
    </ligand>
</feature>
<keyword id="KW-0067">ATP-binding</keyword>
<keyword id="KW-0119">Carbohydrate metabolism</keyword>
<keyword id="KW-0418">Kinase</keyword>
<keyword id="KW-0547">Nucleotide-binding</keyword>
<keyword id="KW-1185">Reference proteome</keyword>
<keyword id="KW-0808">Transferase</keyword>
<reference key="1">
    <citation type="journal article" date="2011" name="MBio">
        <title>Novel metabolic attributes of the genus Cyanothece, comprising a group of unicellular nitrogen-fixing Cyanobacteria.</title>
        <authorList>
            <person name="Bandyopadhyay A."/>
            <person name="Elvitigala T."/>
            <person name="Welsh E."/>
            <person name="Stockel J."/>
            <person name="Liberton M."/>
            <person name="Min H."/>
            <person name="Sherman L.A."/>
            <person name="Pakrasi H.B."/>
        </authorList>
    </citation>
    <scope>NUCLEOTIDE SEQUENCE [LARGE SCALE GENOMIC DNA]</scope>
    <source>
        <strain>PCC 7424</strain>
    </source>
</reference>
<dbReference type="EC" id="2.7.1.170" evidence="1"/>
<dbReference type="EMBL" id="CP001291">
    <property type="protein sequence ID" value="ACK69462.1"/>
    <property type="molecule type" value="Genomic_DNA"/>
</dbReference>
<dbReference type="RefSeq" id="WP_012598409.1">
    <property type="nucleotide sequence ID" value="NC_011729.1"/>
</dbReference>
<dbReference type="SMR" id="B7KIQ6"/>
<dbReference type="STRING" id="65393.PCC7424_1008"/>
<dbReference type="KEGG" id="cyc:PCC7424_1008"/>
<dbReference type="eggNOG" id="COG2377">
    <property type="taxonomic scope" value="Bacteria"/>
</dbReference>
<dbReference type="HOGENOM" id="CLU_038782_1_0_3"/>
<dbReference type="OrthoDB" id="9763949at2"/>
<dbReference type="UniPathway" id="UPA00343"/>
<dbReference type="UniPathway" id="UPA00544"/>
<dbReference type="Proteomes" id="UP000002384">
    <property type="component" value="Chromosome"/>
</dbReference>
<dbReference type="GO" id="GO:0005524">
    <property type="term" value="F:ATP binding"/>
    <property type="evidence" value="ECO:0007669"/>
    <property type="project" value="UniProtKB-UniRule"/>
</dbReference>
<dbReference type="GO" id="GO:0016301">
    <property type="term" value="F:kinase activity"/>
    <property type="evidence" value="ECO:0007669"/>
    <property type="project" value="UniProtKB-KW"/>
</dbReference>
<dbReference type="GO" id="GO:0016773">
    <property type="term" value="F:phosphotransferase activity, alcohol group as acceptor"/>
    <property type="evidence" value="ECO:0007669"/>
    <property type="project" value="UniProtKB-UniRule"/>
</dbReference>
<dbReference type="GO" id="GO:0097175">
    <property type="term" value="P:1,6-anhydro-N-acetyl-beta-muramic acid catabolic process"/>
    <property type="evidence" value="ECO:0007669"/>
    <property type="project" value="UniProtKB-UniRule"/>
</dbReference>
<dbReference type="GO" id="GO:0006040">
    <property type="term" value="P:amino sugar metabolic process"/>
    <property type="evidence" value="ECO:0007669"/>
    <property type="project" value="InterPro"/>
</dbReference>
<dbReference type="GO" id="GO:0009254">
    <property type="term" value="P:peptidoglycan turnover"/>
    <property type="evidence" value="ECO:0007669"/>
    <property type="project" value="UniProtKB-UniRule"/>
</dbReference>
<dbReference type="CDD" id="cd24050">
    <property type="entry name" value="ASKHA_NBD_ANMK"/>
    <property type="match status" value="1"/>
</dbReference>
<dbReference type="Gene3D" id="3.30.420.40">
    <property type="match status" value="2"/>
</dbReference>
<dbReference type="HAMAP" id="MF_01270">
    <property type="entry name" value="AnhMurNAc_kinase"/>
    <property type="match status" value="1"/>
</dbReference>
<dbReference type="InterPro" id="IPR005338">
    <property type="entry name" value="Anhydro_N_Ac-Mur_kinase"/>
</dbReference>
<dbReference type="InterPro" id="IPR043129">
    <property type="entry name" value="ATPase_NBD"/>
</dbReference>
<dbReference type="NCBIfam" id="NF007143">
    <property type="entry name" value="PRK09585.2-2"/>
    <property type="match status" value="1"/>
</dbReference>
<dbReference type="NCBIfam" id="NF007148">
    <property type="entry name" value="PRK09585.3-2"/>
    <property type="match status" value="1"/>
</dbReference>
<dbReference type="PANTHER" id="PTHR30605">
    <property type="entry name" value="ANHYDRO-N-ACETYLMURAMIC ACID KINASE"/>
    <property type="match status" value="1"/>
</dbReference>
<dbReference type="PANTHER" id="PTHR30605:SF0">
    <property type="entry name" value="ANHYDRO-N-ACETYLMURAMIC ACID KINASE"/>
    <property type="match status" value="1"/>
</dbReference>
<dbReference type="Pfam" id="PF03702">
    <property type="entry name" value="AnmK"/>
    <property type="match status" value="1"/>
</dbReference>
<dbReference type="SUPFAM" id="SSF53067">
    <property type="entry name" value="Actin-like ATPase domain"/>
    <property type="match status" value="1"/>
</dbReference>
<gene>
    <name evidence="1" type="primary">anmK</name>
    <name type="ordered locus">PCC7424_1008</name>
</gene>
<evidence type="ECO:0000255" key="1">
    <source>
        <dbReference type="HAMAP-Rule" id="MF_01270"/>
    </source>
</evidence>
<sequence length="391" mass="42719">MYCIGLMSGTSVDGIDAALVNISGKDLDLHIELIAGATYPYPPALREKIIAVSEGVSLSMVELAQLDDAIATQFALAAQKIQKGHPQAELIGSHGQTIYHRPPKIKRGEFSQTDLGYSLQLGRGEVITDLTGIPTVSKFRIADIAAGGQGAPLVPKVDAYLLSHPTQTRCIQNIGGIGNVTYLPPRNQENWESHVYGWDTGPGNVLIDLAVQKLTNGQKTYDENGEWAAQGKPSQDLVTKWLQYDFFYQAPPKSTGRELFGHEYLDKCWTDAIALQLPPEDFLASLVELTVASIIHNYRAFLPQMPQAVLLCGGGSHNLYLKQRLQENLGHQSQVLTTDEVGINGDYKEAITFAVLAYWRKICSFPGNLPQVTGASKPMLLGDIHLPISQI</sequence>
<organism>
    <name type="scientific">Gloeothece citriformis (strain PCC 7424)</name>
    <name type="common">Cyanothece sp. (strain PCC 7424)</name>
    <dbReference type="NCBI Taxonomy" id="65393"/>
    <lineage>
        <taxon>Bacteria</taxon>
        <taxon>Bacillati</taxon>
        <taxon>Cyanobacteriota</taxon>
        <taxon>Cyanophyceae</taxon>
        <taxon>Oscillatoriophycideae</taxon>
        <taxon>Chroococcales</taxon>
        <taxon>Aphanothecaceae</taxon>
        <taxon>Gloeothece</taxon>
        <taxon>Gloeothece citriformis</taxon>
    </lineage>
</organism>
<protein>
    <recommendedName>
        <fullName evidence="1">Anhydro-N-acetylmuramic acid kinase</fullName>
        <ecNumber evidence="1">2.7.1.170</ecNumber>
    </recommendedName>
    <alternativeName>
        <fullName evidence="1">AnhMurNAc kinase</fullName>
    </alternativeName>
</protein>
<name>ANMK_GLOC7</name>
<proteinExistence type="inferred from homology"/>